<sequence length="255" mass="29067">MLLPAANVIMQLAVPGVGYGVLESPVDSGNVYKHPFKRARTTGTYLAVATIGTESDRALIRGAVDVAHRQVRSTASSPVSYNAFDPKLQLWVAACLYRYFVDQHEFLYGPLEDATADAVYQDAKRLGTTLQVPEGMWPPDRVAFDEYWKRSLDGLQIDAPVREHLRGVASVAFLPWPLRAVAGPFNLFATTGFLAPEFRAMMQLEWSQAQQRRFEWLLSVLRLADRLIPHRAWIFVYQLYLWDMRFRARHGRRIV</sequence>
<comment type="subcellular location">
    <subcellularLocation>
        <location evidence="2">Cell membrane</location>
        <topology evidence="2">Multi-pass membrane protein</topology>
    </subcellularLocation>
</comment>
<name>Y2261_MYCBO</name>
<organism>
    <name type="scientific">Mycobacterium bovis (strain ATCC BAA-935 / AF2122/97)</name>
    <dbReference type="NCBI Taxonomy" id="233413"/>
    <lineage>
        <taxon>Bacteria</taxon>
        <taxon>Bacillati</taxon>
        <taxon>Actinomycetota</taxon>
        <taxon>Actinomycetes</taxon>
        <taxon>Mycobacteriales</taxon>
        <taxon>Mycobacteriaceae</taxon>
        <taxon>Mycobacterium</taxon>
        <taxon>Mycobacterium tuberculosis complex</taxon>
    </lineage>
</organism>
<gene>
    <name type="ordered locus">BQ2027_MB2261</name>
</gene>
<evidence type="ECO:0000255" key="1"/>
<evidence type="ECO:0000305" key="2"/>
<keyword id="KW-1003">Cell membrane</keyword>
<keyword id="KW-0472">Membrane</keyword>
<keyword id="KW-1185">Reference proteome</keyword>
<keyword id="KW-0812">Transmembrane</keyword>
<keyword id="KW-1133">Transmembrane helix</keyword>
<protein>
    <recommendedName>
        <fullName>Uncharacterized protein Mb2261</fullName>
    </recommendedName>
</protein>
<reference key="1">
    <citation type="journal article" date="2003" name="Proc. Natl. Acad. Sci. U.S.A.">
        <title>The complete genome sequence of Mycobacterium bovis.</title>
        <authorList>
            <person name="Garnier T."/>
            <person name="Eiglmeier K."/>
            <person name="Camus J.-C."/>
            <person name="Medina N."/>
            <person name="Mansoor H."/>
            <person name="Pryor M."/>
            <person name="Duthoy S."/>
            <person name="Grondin S."/>
            <person name="Lacroix C."/>
            <person name="Monsempe C."/>
            <person name="Simon S."/>
            <person name="Harris B."/>
            <person name="Atkin R."/>
            <person name="Doggett J."/>
            <person name="Mayes R."/>
            <person name="Keating L."/>
            <person name="Wheeler P.R."/>
            <person name="Parkhill J."/>
            <person name="Barrell B.G."/>
            <person name="Cole S.T."/>
            <person name="Gordon S.V."/>
            <person name="Hewinson R.G."/>
        </authorList>
    </citation>
    <scope>NUCLEOTIDE SEQUENCE [LARGE SCALE GENOMIC DNA]</scope>
    <source>
        <strain>ATCC BAA-935 / AF2122/97</strain>
    </source>
</reference>
<reference key="2">
    <citation type="journal article" date="2017" name="Genome Announc.">
        <title>Updated reference genome sequence and annotation of Mycobacterium bovis AF2122/97.</title>
        <authorList>
            <person name="Malone K.M."/>
            <person name="Farrell D."/>
            <person name="Stuber T.P."/>
            <person name="Schubert O.T."/>
            <person name="Aebersold R."/>
            <person name="Robbe-Austerman S."/>
            <person name="Gordon S.V."/>
        </authorList>
    </citation>
    <scope>NUCLEOTIDE SEQUENCE [LARGE SCALE GENOMIC DNA]</scope>
    <scope>GENOME REANNOTATION</scope>
    <source>
        <strain>ATCC BAA-935 / AF2122/97</strain>
    </source>
</reference>
<proteinExistence type="predicted"/>
<dbReference type="EMBL" id="LT708304">
    <property type="protein sequence ID" value="SIU00871.1"/>
    <property type="molecule type" value="Genomic_DNA"/>
</dbReference>
<dbReference type="RefSeq" id="NP_855910.1">
    <property type="nucleotide sequence ID" value="NC_002945.3"/>
</dbReference>
<dbReference type="SMR" id="P64958"/>
<dbReference type="KEGG" id="mbo:BQ2027_MB2261"/>
<dbReference type="PATRIC" id="fig|233413.5.peg.2481"/>
<dbReference type="Proteomes" id="UP000001419">
    <property type="component" value="Chromosome"/>
</dbReference>
<dbReference type="GO" id="GO:0005886">
    <property type="term" value="C:plasma membrane"/>
    <property type="evidence" value="ECO:0007669"/>
    <property type="project" value="UniProtKB-SubCell"/>
</dbReference>
<dbReference type="GO" id="GO:0016491">
    <property type="term" value="F:oxidoreductase activity"/>
    <property type="evidence" value="ECO:0007669"/>
    <property type="project" value="InterPro"/>
</dbReference>
<dbReference type="InterPro" id="IPR018713">
    <property type="entry name" value="MPAB/Lcp_cat_dom"/>
</dbReference>
<dbReference type="PANTHER" id="PTHR36151">
    <property type="entry name" value="BLR2777 PROTEIN"/>
    <property type="match status" value="1"/>
</dbReference>
<dbReference type="PANTHER" id="PTHR36151:SF3">
    <property type="entry name" value="ER-BOUND OXYGENASE MPAB_MPAB'_RUBBER OXYGENASE CATALYTIC DOMAIN-CONTAINING PROTEIN"/>
    <property type="match status" value="1"/>
</dbReference>
<dbReference type="Pfam" id="PF09995">
    <property type="entry name" value="MPAB_Lcp_cat"/>
    <property type="match status" value="1"/>
</dbReference>
<feature type="chain" id="PRO_0000103986" description="Uncharacterized protein Mb2261">
    <location>
        <begin position="1"/>
        <end position="255"/>
    </location>
</feature>
<feature type="transmembrane region" description="Helical" evidence="1">
    <location>
        <begin position="2"/>
        <end position="22"/>
    </location>
</feature>
<feature type="transmembrane region" description="Helical" evidence="1">
    <location>
        <begin position="168"/>
        <end position="188"/>
    </location>
</feature>
<accession>P64958</accession>
<accession>A0A1R3Y0M2</accession>
<accession>Q10519</accession>
<accession>X2BJN9</accession>